<reference key="1">
    <citation type="journal article" date="2003" name="Proc. Natl. Acad. Sci. U.S.A.">
        <title>The complete genome sequence of the carcinogenic bacterium Helicobacter hepaticus.</title>
        <authorList>
            <person name="Suerbaum S."/>
            <person name="Josenhans C."/>
            <person name="Sterzenbach T."/>
            <person name="Drescher B."/>
            <person name="Brandt P."/>
            <person name="Bell M."/>
            <person name="Droege M."/>
            <person name="Fartmann B."/>
            <person name="Fischer H.-P."/>
            <person name="Ge Z."/>
            <person name="Hoerster A."/>
            <person name="Holland R."/>
            <person name="Klein K."/>
            <person name="Koenig J."/>
            <person name="Macko L."/>
            <person name="Mendz G.L."/>
            <person name="Nyakatura G."/>
            <person name="Schauer D.B."/>
            <person name="Shen Z."/>
            <person name="Weber J."/>
            <person name="Frosch M."/>
            <person name="Fox J.G."/>
        </authorList>
    </citation>
    <scope>NUCLEOTIDE SEQUENCE [LARGE SCALE GENOMIC DNA]</scope>
    <source>
        <strain>ATCC 51449 / 3B1</strain>
    </source>
</reference>
<keyword id="KW-0963">Cytoplasm</keyword>
<keyword id="KW-0396">Initiation factor</keyword>
<keyword id="KW-0648">Protein biosynthesis</keyword>
<keyword id="KW-1185">Reference proteome</keyword>
<accession>Q7VJ08</accession>
<evidence type="ECO:0000255" key="1">
    <source>
        <dbReference type="HAMAP-Rule" id="MF_00080"/>
    </source>
</evidence>
<protein>
    <recommendedName>
        <fullName evidence="1">Translation initiation factor IF-3</fullName>
    </recommendedName>
</protein>
<proteinExistence type="inferred from homology"/>
<name>IF3_HELHP</name>
<comment type="function">
    <text evidence="1">IF-3 binds to the 30S ribosomal subunit and shifts the equilibrium between 70S ribosomes and their 50S and 30S subunits in favor of the free subunits, thus enhancing the availability of 30S subunits on which protein synthesis initiation begins.</text>
</comment>
<comment type="subunit">
    <text evidence="1">Monomer.</text>
</comment>
<comment type="subcellular location">
    <subcellularLocation>
        <location evidence="1">Cytoplasm</location>
    </subcellularLocation>
</comment>
<comment type="similarity">
    <text evidence="1">Belongs to the IF-3 family.</text>
</comment>
<sequence>MSKEEVLLNEEIDFKEVRCVSDNGEVYGIISSKEALNLAHKAGLDLVLISPNAKPPVCKIMDYGKFRYQAEKKQKEARKKQKQIEIKEIKLSTQIAQNDINYKVKHAIEFLESGKHVKFKVFLKQRELNIPDAGMDTLGKVAVMLEDIAIAEKEPKLEGKHLNVLYVPKKKEKH</sequence>
<gene>
    <name evidence="1" type="primary">infC</name>
    <name type="ordered locus">HH_0443</name>
</gene>
<feature type="chain" id="PRO_0000177524" description="Translation initiation factor IF-3">
    <location>
        <begin position="1"/>
        <end position="174"/>
    </location>
</feature>
<dbReference type="EMBL" id="AE017125">
    <property type="protein sequence ID" value="AAP77040.1"/>
    <property type="molecule type" value="Genomic_DNA"/>
</dbReference>
<dbReference type="RefSeq" id="WP_011115285.1">
    <property type="nucleotide sequence ID" value="NC_004917.1"/>
</dbReference>
<dbReference type="SMR" id="Q7VJ08"/>
<dbReference type="STRING" id="235279.HH_0443"/>
<dbReference type="KEGG" id="hhe:HH_0443"/>
<dbReference type="eggNOG" id="COG0290">
    <property type="taxonomic scope" value="Bacteria"/>
</dbReference>
<dbReference type="HOGENOM" id="CLU_054919_3_2_7"/>
<dbReference type="OrthoDB" id="9806014at2"/>
<dbReference type="Proteomes" id="UP000002495">
    <property type="component" value="Chromosome"/>
</dbReference>
<dbReference type="GO" id="GO:0005829">
    <property type="term" value="C:cytosol"/>
    <property type="evidence" value="ECO:0007669"/>
    <property type="project" value="TreeGrafter"/>
</dbReference>
<dbReference type="GO" id="GO:0016020">
    <property type="term" value="C:membrane"/>
    <property type="evidence" value="ECO:0007669"/>
    <property type="project" value="TreeGrafter"/>
</dbReference>
<dbReference type="GO" id="GO:0043022">
    <property type="term" value="F:ribosome binding"/>
    <property type="evidence" value="ECO:0007669"/>
    <property type="project" value="TreeGrafter"/>
</dbReference>
<dbReference type="GO" id="GO:0003743">
    <property type="term" value="F:translation initiation factor activity"/>
    <property type="evidence" value="ECO:0007669"/>
    <property type="project" value="UniProtKB-UniRule"/>
</dbReference>
<dbReference type="GO" id="GO:0032790">
    <property type="term" value="P:ribosome disassembly"/>
    <property type="evidence" value="ECO:0007669"/>
    <property type="project" value="TreeGrafter"/>
</dbReference>
<dbReference type="FunFam" id="3.10.20.80:FF:000001">
    <property type="entry name" value="Translation initiation factor IF-3"/>
    <property type="match status" value="1"/>
</dbReference>
<dbReference type="Gene3D" id="3.30.110.10">
    <property type="entry name" value="Translation initiation factor 3 (IF-3), C-terminal domain"/>
    <property type="match status" value="1"/>
</dbReference>
<dbReference type="Gene3D" id="3.10.20.80">
    <property type="entry name" value="Translation initiation factor 3 (IF-3), N-terminal domain"/>
    <property type="match status" value="1"/>
</dbReference>
<dbReference type="HAMAP" id="MF_00080">
    <property type="entry name" value="IF_3"/>
    <property type="match status" value="1"/>
</dbReference>
<dbReference type="InterPro" id="IPR036788">
    <property type="entry name" value="T_IF-3_C_sf"/>
</dbReference>
<dbReference type="InterPro" id="IPR036787">
    <property type="entry name" value="T_IF-3_N_sf"/>
</dbReference>
<dbReference type="InterPro" id="IPR019813">
    <property type="entry name" value="Translation_initiation_fac3_CS"/>
</dbReference>
<dbReference type="InterPro" id="IPR001288">
    <property type="entry name" value="Translation_initiation_fac_3"/>
</dbReference>
<dbReference type="InterPro" id="IPR019815">
    <property type="entry name" value="Translation_initiation_fac_3_C"/>
</dbReference>
<dbReference type="InterPro" id="IPR019814">
    <property type="entry name" value="Translation_initiation_fac_3_N"/>
</dbReference>
<dbReference type="NCBIfam" id="TIGR00168">
    <property type="entry name" value="infC"/>
    <property type="match status" value="1"/>
</dbReference>
<dbReference type="PANTHER" id="PTHR10938">
    <property type="entry name" value="TRANSLATION INITIATION FACTOR IF-3"/>
    <property type="match status" value="1"/>
</dbReference>
<dbReference type="PANTHER" id="PTHR10938:SF0">
    <property type="entry name" value="TRANSLATION INITIATION FACTOR IF-3, MITOCHONDRIAL"/>
    <property type="match status" value="1"/>
</dbReference>
<dbReference type="Pfam" id="PF00707">
    <property type="entry name" value="IF3_C"/>
    <property type="match status" value="1"/>
</dbReference>
<dbReference type="Pfam" id="PF05198">
    <property type="entry name" value="IF3_N"/>
    <property type="match status" value="1"/>
</dbReference>
<dbReference type="SUPFAM" id="SSF55200">
    <property type="entry name" value="Translation initiation factor IF3, C-terminal domain"/>
    <property type="match status" value="1"/>
</dbReference>
<dbReference type="SUPFAM" id="SSF54364">
    <property type="entry name" value="Translation initiation factor IF3, N-terminal domain"/>
    <property type="match status" value="1"/>
</dbReference>
<dbReference type="PROSITE" id="PS00938">
    <property type="entry name" value="IF3"/>
    <property type="match status" value="1"/>
</dbReference>
<organism>
    <name type="scientific">Helicobacter hepaticus (strain ATCC 51449 / 3B1)</name>
    <dbReference type="NCBI Taxonomy" id="235279"/>
    <lineage>
        <taxon>Bacteria</taxon>
        <taxon>Pseudomonadati</taxon>
        <taxon>Campylobacterota</taxon>
        <taxon>Epsilonproteobacteria</taxon>
        <taxon>Campylobacterales</taxon>
        <taxon>Helicobacteraceae</taxon>
        <taxon>Helicobacter</taxon>
    </lineage>
</organism>